<accession>O66469</accession>
<proteinExistence type="inferred from homology"/>
<evidence type="ECO:0000255" key="1">
    <source>
        <dbReference type="HAMAP-Rule" id="MF_00095"/>
    </source>
</evidence>
<feature type="chain" id="PRO_0000152268" description="Sugar fermentation stimulation protein homolog">
    <location>
        <begin position="1"/>
        <end position="214"/>
    </location>
</feature>
<name>SFSA_AQUAE</name>
<sequence length="214" mass="25059">MKLPPLMPAIFVKRLNRFVGKVFLNGKIERALIRNTGRLSELLKFGNTVFVREKEGGKYRYEIILARAEKSLVCVESHYANKIFEEYIRRNWKFKELKREVKLENERFDFLIDNTLVEVKSVNLVKNGVAMFPDAPTKRGTGHIRTLIKLSDKFKPLLVFVVQRSDFLSFEPNCETDPEFCKAYYEYVSKGFEVLVLKCRVSLEEINVVEVFFT</sequence>
<gene>
    <name evidence="1" type="primary">sfsA</name>
    <name type="ordered locus">aq_057</name>
</gene>
<protein>
    <recommendedName>
        <fullName evidence="1">Sugar fermentation stimulation protein homolog</fullName>
    </recommendedName>
</protein>
<reference key="1">
    <citation type="journal article" date="1998" name="Nature">
        <title>The complete genome of the hyperthermophilic bacterium Aquifex aeolicus.</title>
        <authorList>
            <person name="Deckert G."/>
            <person name="Warren P.V."/>
            <person name="Gaasterland T."/>
            <person name="Young W.G."/>
            <person name="Lenox A.L."/>
            <person name="Graham D.E."/>
            <person name="Overbeek R."/>
            <person name="Snead M.A."/>
            <person name="Keller M."/>
            <person name="Aujay M."/>
            <person name="Huber R."/>
            <person name="Feldman R.A."/>
            <person name="Short J.M."/>
            <person name="Olsen G.J."/>
            <person name="Swanson R.V."/>
        </authorList>
    </citation>
    <scope>NUCLEOTIDE SEQUENCE [LARGE SCALE GENOMIC DNA]</scope>
    <source>
        <strain>VF5</strain>
    </source>
</reference>
<organism>
    <name type="scientific">Aquifex aeolicus (strain VF5)</name>
    <dbReference type="NCBI Taxonomy" id="224324"/>
    <lineage>
        <taxon>Bacteria</taxon>
        <taxon>Pseudomonadati</taxon>
        <taxon>Aquificota</taxon>
        <taxon>Aquificia</taxon>
        <taxon>Aquificales</taxon>
        <taxon>Aquificaceae</taxon>
        <taxon>Aquifex</taxon>
    </lineage>
</organism>
<keyword id="KW-1185">Reference proteome</keyword>
<dbReference type="EMBL" id="AE000657">
    <property type="protein sequence ID" value="AAC06428.1"/>
    <property type="molecule type" value="Genomic_DNA"/>
</dbReference>
<dbReference type="PIR" id="B70305">
    <property type="entry name" value="B70305"/>
</dbReference>
<dbReference type="RefSeq" id="NP_213029.1">
    <property type="nucleotide sequence ID" value="NC_000918.1"/>
</dbReference>
<dbReference type="RefSeq" id="WP_010879967.1">
    <property type="nucleotide sequence ID" value="NC_000918.1"/>
</dbReference>
<dbReference type="SMR" id="O66469"/>
<dbReference type="FunCoup" id="O66469">
    <property type="interactions" value="12"/>
</dbReference>
<dbReference type="STRING" id="224324.aq_057"/>
<dbReference type="EnsemblBacteria" id="AAC06428">
    <property type="protein sequence ID" value="AAC06428"/>
    <property type="gene ID" value="aq_057"/>
</dbReference>
<dbReference type="KEGG" id="aae:aq_057"/>
<dbReference type="PATRIC" id="fig|224324.8.peg.45"/>
<dbReference type="eggNOG" id="COG1489">
    <property type="taxonomic scope" value="Bacteria"/>
</dbReference>
<dbReference type="HOGENOM" id="CLU_052299_1_0_0"/>
<dbReference type="InParanoid" id="O66469"/>
<dbReference type="OrthoDB" id="9802365at2"/>
<dbReference type="Proteomes" id="UP000000798">
    <property type="component" value="Chromosome"/>
</dbReference>
<dbReference type="GO" id="GO:0003677">
    <property type="term" value="F:DNA binding"/>
    <property type="evidence" value="ECO:0000318"/>
    <property type="project" value="GO_Central"/>
</dbReference>
<dbReference type="CDD" id="cd22358">
    <property type="entry name" value="SfsA-like_archaeal"/>
    <property type="match status" value="1"/>
</dbReference>
<dbReference type="FunFam" id="2.40.50.580:FF:000002">
    <property type="entry name" value="Sugar fermentation stimulation protein homolog"/>
    <property type="match status" value="1"/>
</dbReference>
<dbReference type="Gene3D" id="2.40.50.580">
    <property type="match status" value="1"/>
</dbReference>
<dbReference type="Gene3D" id="3.40.1350.60">
    <property type="match status" value="1"/>
</dbReference>
<dbReference type="HAMAP" id="MF_00095">
    <property type="entry name" value="SfsA"/>
    <property type="match status" value="1"/>
</dbReference>
<dbReference type="InterPro" id="IPR005224">
    <property type="entry name" value="SfsA"/>
</dbReference>
<dbReference type="InterPro" id="IPR040452">
    <property type="entry name" value="SfsA_C"/>
</dbReference>
<dbReference type="InterPro" id="IPR041465">
    <property type="entry name" value="SfsA_N"/>
</dbReference>
<dbReference type="NCBIfam" id="TIGR00230">
    <property type="entry name" value="sfsA"/>
    <property type="match status" value="1"/>
</dbReference>
<dbReference type="PANTHER" id="PTHR30545">
    <property type="entry name" value="SUGAR FERMENTATION STIMULATION PROTEIN A"/>
    <property type="match status" value="1"/>
</dbReference>
<dbReference type="PANTHER" id="PTHR30545:SF2">
    <property type="entry name" value="SUGAR FERMENTATION STIMULATION PROTEIN A"/>
    <property type="match status" value="1"/>
</dbReference>
<dbReference type="Pfam" id="PF03749">
    <property type="entry name" value="SfsA"/>
    <property type="match status" value="1"/>
</dbReference>
<dbReference type="Pfam" id="PF17746">
    <property type="entry name" value="SfsA_N"/>
    <property type="match status" value="1"/>
</dbReference>
<comment type="similarity">
    <text evidence="1">Belongs to the SfsA family.</text>
</comment>